<accession>P05317</accession>
<accession>D6VYX8</accession>
<feature type="chain" id="PRO_0000154786" description="Large ribosomal subunit protein uL10">
    <location>
        <begin position="1"/>
        <end position="312"/>
    </location>
</feature>
<feature type="region of interest" description="Interaction with P1A-P2B">
    <location>
        <begin position="199"/>
        <end position="230"/>
    </location>
</feature>
<feature type="region of interest" description="Interaction with P1B-P2A">
    <location>
        <begin position="231"/>
        <end position="258"/>
    </location>
</feature>
<feature type="region of interest" description="Disordered" evidence="1">
    <location>
        <begin position="278"/>
        <end position="312"/>
    </location>
</feature>
<feature type="compositionally biased region" description="Low complexity" evidence="1">
    <location>
        <begin position="278"/>
        <end position="293"/>
    </location>
</feature>
<feature type="compositionally biased region" description="Acidic residues" evidence="1">
    <location>
        <begin position="294"/>
        <end position="306"/>
    </location>
</feature>
<feature type="modified residue" description="Phosphoserine" evidence="13">
    <location>
        <position position="68"/>
    </location>
</feature>
<feature type="modified residue" description="Phosphoserine; by CK2" evidence="5 11 12 13">
    <location>
        <position position="302"/>
    </location>
</feature>
<feature type="cross-link" description="Glycyl lysine isopeptide (Lys-Gly) (interchain with G-Cter in ubiquitin)" evidence="14">
    <location>
        <position position="14"/>
    </location>
</feature>
<feature type="cross-link" description="Glycyl lysine isopeptide (Lys-Gly) (interchain with G-Cter in ubiquitin)" evidence="14">
    <location>
        <position position="97"/>
    </location>
</feature>
<feature type="cross-link" description="Glycyl lysine isopeptide (Lys-Gly) (interchain with G-Cter in ubiquitin)" evidence="14">
    <location>
        <position position="144"/>
    </location>
</feature>
<feature type="sequence conflict" description="In Ref. 1; CAA30029 and 2; BAA00415/CAA31703." evidence="8" ref="1 2">
    <original>N</original>
    <variation>Y</variation>
    <location>
        <position position="83"/>
    </location>
</feature>
<feature type="helix" evidence="17">
    <location>
        <begin position="4"/>
        <end position="21"/>
    </location>
</feature>
<feature type="strand" evidence="17">
    <location>
        <begin position="23"/>
        <end position="29"/>
    </location>
</feature>
<feature type="helix" evidence="17">
    <location>
        <begin position="35"/>
        <end position="43"/>
    </location>
</feature>
<feature type="strand" evidence="16">
    <location>
        <begin position="46"/>
        <end position="48"/>
    </location>
</feature>
<feature type="strand" evidence="17">
    <location>
        <begin position="50"/>
        <end position="53"/>
    </location>
</feature>
<feature type="helix" evidence="17">
    <location>
        <begin position="56"/>
        <end position="64"/>
    </location>
</feature>
<feature type="strand" evidence="17">
    <location>
        <begin position="68"/>
        <end position="70"/>
    </location>
</feature>
<feature type="helix" evidence="17">
    <location>
        <begin position="72"/>
        <end position="74"/>
    </location>
</feature>
<feature type="helix" evidence="17">
    <location>
        <begin position="77"/>
        <end position="79"/>
    </location>
</feature>
<feature type="strand" evidence="17">
    <location>
        <begin position="82"/>
        <end position="89"/>
    </location>
</feature>
<feature type="helix" evidence="17">
    <location>
        <begin position="93"/>
        <end position="102"/>
    </location>
</feature>
<feature type="strand" evidence="17">
    <location>
        <begin position="186"/>
        <end position="194"/>
    </location>
</feature>
<feature type="strand" evidence="15">
    <location>
        <begin position="195"/>
        <end position="197"/>
    </location>
</feature>
<feature type="turn" evidence="17">
    <location>
        <begin position="200"/>
        <end position="202"/>
    </location>
</feature>
<feature type="helix" evidence="17">
    <location>
        <begin position="210"/>
        <end position="213"/>
    </location>
</feature>
<feature type="turn" evidence="17">
    <location>
        <begin position="214"/>
        <end position="219"/>
    </location>
</feature>
<dbReference type="EMBL" id="X06959">
    <property type="protein sequence ID" value="CAA30029.1"/>
    <property type="molecule type" value="mRNA"/>
</dbReference>
<dbReference type="EMBL" id="D00529">
    <property type="protein sequence ID" value="BAA00415.1"/>
    <property type="molecule type" value="Genomic_DNA"/>
</dbReference>
<dbReference type="EMBL" id="X13328">
    <property type="protein sequence ID" value="CAA31703.1"/>
    <property type="molecule type" value="Genomic_DNA"/>
</dbReference>
<dbReference type="EMBL" id="M26506">
    <property type="protein sequence ID" value="AAA34730.1"/>
    <property type="molecule type" value="Genomic_DNA"/>
</dbReference>
<dbReference type="EMBL" id="M37326">
    <property type="protein sequence ID" value="AAA34729.1"/>
    <property type="molecule type" value="Genomic_DNA"/>
</dbReference>
<dbReference type="EMBL" id="U19028">
    <property type="protein sequence ID" value="AAB67258.1"/>
    <property type="molecule type" value="Genomic_DNA"/>
</dbReference>
<dbReference type="EMBL" id="BK006945">
    <property type="protein sequence ID" value="DAA09644.1"/>
    <property type="molecule type" value="Genomic_DNA"/>
</dbReference>
<dbReference type="PIR" id="S51343">
    <property type="entry name" value="R5BY0E"/>
</dbReference>
<dbReference type="RefSeq" id="NP_013444.1">
    <property type="nucleotide sequence ID" value="NM_001182229.1"/>
</dbReference>
<dbReference type="PDB" id="3J16">
    <property type="method" value="EM"/>
    <property type="chains" value="G=1-312"/>
</dbReference>
<dbReference type="PDB" id="3J77">
    <property type="method" value="EM"/>
    <property type="resolution" value="6.20 A"/>
    <property type="chains" value="P0=1-312"/>
</dbReference>
<dbReference type="PDB" id="3J78">
    <property type="method" value="EM"/>
    <property type="resolution" value="6.30 A"/>
    <property type="chains" value="P0=1-312"/>
</dbReference>
<dbReference type="PDB" id="4U3M">
    <property type="method" value="X-ray"/>
    <property type="resolution" value="3.00 A"/>
    <property type="chains" value="p0=2-311"/>
</dbReference>
<dbReference type="PDB" id="4U3N">
    <property type="method" value="X-ray"/>
    <property type="resolution" value="3.20 A"/>
    <property type="chains" value="p0=2-312"/>
</dbReference>
<dbReference type="PDB" id="4U3U">
    <property type="method" value="X-ray"/>
    <property type="resolution" value="2.90 A"/>
    <property type="chains" value="p0=2-312"/>
</dbReference>
<dbReference type="PDB" id="4U4N">
    <property type="method" value="X-ray"/>
    <property type="resolution" value="3.10 A"/>
    <property type="chains" value="p0=2-312"/>
</dbReference>
<dbReference type="PDB" id="4U4O">
    <property type="method" value="X-ray"/>
    <property type="resolution" value="3.60 A"/>
    <property type="chains" value="p0=2-312"/>
</dbReference>
<dbReference type="PDB" id="4U4Q">
    <property type="method" value="X-ray"/>
    <property type="resolution" value="3.00 A"/>
    <property type="chains" value="p0=2-312"/>
</dbReference>
<dbReference type="PDB" id="4U4R">
    <property type="method" value="X-ray"/>
    <property type="resolution" value="2.80 A"/>
    <property type="chains" value="p0=2-312"/>
</dbReference>
<dbReference type="PDB" id="4U4U">
    <property type="method" value="X-ray"/>
    <property type="resolution" value="3.00 A"/>
    <property type="chains" value="p0=2-312"/>
</dbReference>
<dbReference type="PDB" id="4U4Y">
    <property type="method" value="X-ray"/>
    <property type="resolution" value="3.20 A"/>
    <property type="chains" value="p0=2-312"/>
</dbReference>
<dbReference type="PDB" id="4U4Z">
    <property type="method" value="X-ray"/>
    <property type="resolution" value="3.10 A"/>
    <property type="chains" value="p0=2-312"/>
</dbReference>
<dbReference type="PDB" id="4U50">
    <property type="method" value="X-ray"/>
    <property type="resolution" value="3.20 A"/>
    <property type="chains" value="p0=2-312"/>
</dbReference>
<dbReference type="PDB" id="4U51">
    <property type="method" value="X-ray"/>
    <property type="resolution" value="3.20 A"/>
    <property type="chains" value="p0=2-312"/>
</dbReference>
<dbReference type="PDB" id="4U52">
    <property type="method" value="X-ray"/>
    <property type="resolution" value="3.00 A"/>
    <property type="chains" value="p0=2-312"/>
</dbReference>
<dbReference type="PDB" id="4U53">
    <property type="method" value="X-ray"/>
    <property type="resolution" value="3.30 A"/>
    <property type="chains" value="p0=2-312"/>
</dbReference>
<dbReference type="PDB" id="4U55">
    <property type="method" value="X-ray"/>
    <property type="resolution" value="3.20 A"/>
    <property type="chains" value="p0=2-312"/>
</dbReference>
<dbReference type="PDB" id="4U56">
    <property type="method" value="X-ray"/>
    <property type="resolution" value="3.45 A"/>
    <property type="chains" value="p0=2-312"/>
</dbReference>
<dbReference type="PDB" id="4U6F">
    <property type="method" value="X-ray"/>
    <property type="resolution" value="3.10 A"/>
    <property type="chains" value="p0=2-312"/>
</dbReference>
<dbReference type="PDB" id="4V5Z">
    <property type="method" value="EM"/>
    <property type="resolution" value="8.70 A"/>
    <property type="chains" value="Bg=8-312"/>
</dbReference>
<dbReference type="PDB" id="4V6I">
    <property type="method" value="EM"/>
    <property type="resolution" value="8.80 A"/>
    <property type="chains" value="Bs=1-312"/>
</dbReference>
<dbReference type="PDB" id="4V7R">
    <property type="method" value="X-ray"/>
    <property type="resolution" value="4.00 A"/>
    <property type="chains" value="DM=1-312"/>
</dbReference>
<dbReference type="PDB" id="4V88">
    <property type="method" value="X-ray"/>
    <property type="resolution" value="3.00 A"/>
    <property type="chains" value="Dq=1-312"/>
</dbReference>
<dbReference type="PDB" id="4V8T">
    <property type="method" value="EM"/>
    <property type="resolution" value="8.10 A"/>
    <property type="chains" value="q=1-312"/>
</dbReference>
<dbReference type="PDB" id="4V8Y">
    <property type="method" value="EM"/>
    <property type="resolution" value="4.30 A"/>
    <property type="chains" value="Bq=1-312"/>
</dbReference>
<dbReference type="PDB" id="4V8Z">
    <property type="method" value="EM"/>
    <property type="resolution" value="6.60 A"/>
    <property type="chains" value="Bq=1-237"/>
</dbReference>
<dbReference type="PDB" id="5APN">
    <property type="method" value="EM"/>
    <property type="resolution" value="3.91 A"/>
    <property type="chains" value="q=1-312"/>
</dbReference>
<dbReference type="PDB" id="5APO">
    <property type="method" value="EM"/>
    <property type="resolution" value="3.41 A"/>
    <property type="chains" value="q=1-312"/>
</dbReference>
<dbReference type="PDB" id="5DAT">
    <property type="method" value="X-ray"/>
    <property type="resolution" value="3.15 A"/>
    <property type="chains" value="p0=2-221"/>
</dbReference>
<dbReference type="PDB" id="5DC3">
    <property type="method" value="X-ray"/>
    <property type="resolution" value="3.25 A"/>
    <property type="chains" value="p0=2-312"/>
</dbReference>
<dbReference type="PDB" id="5DGE">
    <property type="method" value="X-ray"/>
    <property type="resolution" value="3.45 A"/>
    <property type="chains" value="p0=2-312"/>
</dbReference>
<dbReference type="PDB" id="5DGF">
    <property type="method" value="X-ray"/>
    <property type="resolution" value="3.30 A"/>
    <property type="chains" value="p0=1-312"/>
</dbReference>
<dbReference type="PDB" id="5DGV">
    <property type="method" value="X-ray"/>
    <property type="resolution" value="3.10 A"/>
    <property type="chains" value="p0=2-312"/>
</dbReference>
<dbReference type="PDB" id="5FCI">
    <property type="method" value="X-ray"/>
    <property type="resolution" value="3.40 A"/>
    <property type="chains" value="p0=2-311"/>
</dbReference>
<dbReference type="PDB" id="5FCJ">
    <property type="method" value="X-ray"/>
    <property type="resolution" value="3.10 A"/>
    <property type="chains" value="p0=2-312"/>
</dbReference>
<dbReference type="PDB" id="5I4L">
    <property type="method" value="X-ray"/>
    <property type="resolution" value="3.10 A"/>
    <property type="chains" value="p0=1-312"/>
</dbReference>
<dbReference type="PDB" id="5JUO">
    <property type="method" value="EM"/>
    <property type="resolution" value="4.00 A"/>
    <property type="chains" value="VA=1-312"/>
</dbReference>
<dbReference type="PDB" id="5JUP">
    <property type="method" value="EM"/>
    <property type="resolution" value="3.50 A"/>
    <property type="chains" value="VA=1-312"/>
</dbReference>
<dbReference type="PDB" id="5JUS">
    <property type="method" value="EM"/>
    <property type="resolution" value="4.20 A"/>
    <property type="chains" value="VA=1-312"/>
</dbReference>
<dbReference type="PDB" id="5JUT">
    <property type="method" value="EM"/>
    <property type="resolution" value="4.00 A"/>
    <property type="chains" value="VA=1-312"/>
</dbReference>
<dbReference type="PDB" id="5JUU">
    <property type="method" value="EM"/>
    <property type="resolution" value="4.00 A"/>
    <property type="chains" value="VA=1-312"/>
</dbReference>
<dbReference type="PDB" id="5LYB">
    <property type="method" value="X-ray"/>
    <property type="resolution" value="3.25 A"/>
    <property type="chains" value="p0=3-198"/>
</dbReference>
<dbReference type="PDB" id="5MEI">
    <property type="method" value="X-ray"/>
    <property type="resolution" value="3.50 A"/>
    <property type="chains" value="p0=2-221"/>
</dbReference>
<dbReference type="PDB" id="5NDG">
    <property type="method" value="X-ray"/>
    <property type="resolution" value="3.70 A"/>
    <property type="chains" value="p0=1-312"/>
</dbReference>
<dbReference type="PDB" id="5OBM">
    <property type="method" value="X-ray"/>
    <property type="resolution" value="3.40 A"/>
    <property type="chains" value="p0=1-312"/>
</dbReference>
<dbReference type="PDB" id="5ON6">
    <property type="method" value="X-ray"/>
    <property type="resolution" value="3.10 A"/>
    <property type="chains" value="p0=2-312"/>
</dbReference>
<dbReference type="PDB" id="5TBW">
    <property type="method" value="X-ray"/>
    <property type="resolution" value="3.00 A"/>
    <property type="chains" value="p0=3-221"/>
</dbReference>
<dbReference type="PDB" id="5TGA">
    <property type="method" value="X-ray"/>
    <property type="resolution" value="3.30 A"/>
    <property type="chains" value="p0=3-221"/>
</dbReference>
<dbReference type="PDB" id="5TGM">
    <property type="method" value="X-ray"/>
    <property type="resolution" value="3.50 A"/>
    <property type="chains" value="p0=1-312"/>
</dbReference>
<dbReference type="PDB" id="6GQ1">
    <property type="method" value="EM"/>
    <property type="resolution" value="4.40 A"/>
    <property type="chains" value="P0=5-193"/>
</dbReference>
<dbReference type="PDB" id="6GQB">
    <property type="method" value="EM"/>
    <property type="resolution" value="3.90 A"/>
    <property type="chains" value="P0=5-193"/>
</dbReference>
<dbReference type="PDB" id="6GQV">
    <property type="method" value="EM"/>
    <property type="resolution" value="4.00 A"/>
    <property type="chains" value="P0=5-193"/>
</dbReference>
<dbReference type="PDB" id="6HHQ">
    <property type="method" value="X-ray"/>
    <property type="resolution" value="3.10 A"/>
    <property type="chains" value="p0=1-312"/>
</dbReference>
<dbReference type="PDB" id="6I7O">
    <property type="method" value="EM"/>
    <property type="resolution" value="5.30 A"/>
    <property type="chains" value="BU/YU=1-312"/>
</dbReference>
<dbReference type="PDB" id="6OIG">
    <property type="method" value="EM"/>
    <property type="resolution" value="3.80 A"/>
    <property type="chains" value="q=3-198"/>
</dbReference>
<dbReference type="PDB" id="6R84">
    <property type="method" value="EM"/>
    <property type="resolution" value="3.60 A"/>
    <property type="chains" value="r=3-199"/>
</dbReference>
<dbReference type="PDB" id="6R86">
    <property type="method" value="EM"/>
    <property type="resolution" value="3.40 A"/>
    <property type="chains" value="r=3-199"/>
</dbReference>
<dbReference type="PDB" id="6R87">
    <property type="method" value="EM"/>
    <property type="resolution" value="3.40 A"/>
    <property type="chains" value="r=3-199"/>
</dbReference>
<dbReference type="PDB" id="6SV4">
    <property type="method" value="EM"/>
    <property type="resolution" value="3.30 A"/>
    <property type="chains" value="BU/YU/ZU=1-312"/>
</dbReference>
<dbReference type="PDB" id="6T83">
    <property type="method" value="EM"/>
    <property type="resolution" value="4.00 A"/>
    <property type="chains" value="ba=2-312"/>
</dbReference>
<dbReference type="PDB" id="6WOO">
    <property type="method" value="EM"/>
    <property type="resolution" value="2.90 A"/>
    <property type="chains" value="r=6-200"/>
</dbReference>
<dbReference type="PDB" id="7TOO">
    <property type="method" value="EM"/>
    <property type="resolution" value="2.70 A"/>
    <property type="chains" value="ALP0=1-198"/>
</dbReference>
<dbReference type="PDB" id="7TOP">
    <property type="method" value="EM"/>
    <property type="resolution" value="2.40 A"/>
    <property type="chains" value="ALP0=1-198"/>
</dbReference>
<dbReference type="PDB" id="7U6V">
    <property type="method" value="EM"/>
    <property type="resolution" value="4.10 A"/>
    <property type="chains" value="P=307-312"/>
</dbReference>
<dbReference type="PDB" id="8AAF">
    <property type="method" value="EM"/>
    <property type="resolution" value="2.50 A"/>
    <property type="chains" value="0=1-312"/>
</dbReference>
<dbReference type="PDB" id="8AGT">
    <property type="method" value="EM"/>
    <property type="resolution" value="2.60 A"/>
    <property type="chains" value="0=1-312"/>
</dbReference>
<dbReference type="PDB" id="8AGU">
    <property type="method" value="EM"/>
    <property type="resolution" value="2.70 A"/>
    <property type="chains" value="0=1-312"/>
</dbReference>
<dbReference type="PDB" id="8AGV">
    <property type="method" value="EM"/>
    <property type="resolution" value="2.60 A"/>
    <property type="chains" value="0=1-312"/>
</dbReference>
<dbReference type="PDB" id="8AGW">
    <property type="method" value="EM"/>
    <property type="resolution" value="2.60 A"/>
    <property type="chains" value="0=1-312"/>
</dbReference>
<dbReference type="PDB" id="8AGX">
    <property type="method" value="EM"/>
    <property type="resolution" value="2.40 A"/>
    <property type="chains" value="0=1-312"/>
</dbReference>
<dbReference type="PDB" id="8AGZ">
    <property type="method" value="EM"/>
    <property type="resolution" value="2.60 A"/>
    <property type="chains" value="0=1-312"/>
</dbReference>
<dbReference type="PDB" id="8CCS">
    <property type="method" value="EM"/>
    <property type="resolution" value="1.97 A"/>
    <property type="chains" value="DD=1-312"/>
</dbReference>
<dbReference type="PDB" id="8CDL">
    <property type="method" value="EM"/>
    <property type="resolution" value="2.72 A"/>
    <property type="chains" value="DD=1-312"/>
</dbReference>
<dbReference type="PDB" id="8CDR">
    <property type="method" value="EM"/>
    <property type="resolution" value="2.04 A"/>
    <property type="chains" value="DD=1-312"/>
</dbReference>
<dbReference type="PDB" id="8CEH">
    <property type="method" value="EM"/>
    <property type="resolution" value="2.05 A"/>
    <property type="chains" value="DD=1-312"/>
</dbReference>
<dbReference type="PDB" id="8CF5">
    <property type="method" value="EM"/>
    <property type="resolution" value="2.71 A"/>
    <property type="chains" value="DD=1-312"/>
</dbReference>
<dbReference type="PDB" id="8CG8">
    <property type="method" value="EM"/>
    <property type="resolution" value="2.57 A"/>
    <property type="chains" value="DD=1-312"/>
</dbReference>
<dbReference type="PDB" id="8CGN">
    <property type="method" value="EM"/>
    <property type="resolution" value="2.28 A"/>
    <property type="chains" value="DD=1-312"/>
</dbReference>
<dbReference type="PDB" id="8CIV">
    <property type="method" value="EM"/>
    <property type="resolution" value="2.47 A"/>
    <property type="chains" value="DD=1-312"/>
</dbReference>
<dbReference type="PDB" id="8CKU">
    <property type="method" value="EM"/>
    <property type="resolution" value="3.11 A"/>
    <property type="chains" value="DD=1-312"/>
</dbReference>
<dbReference type="PDB" id="8CMJ">
    <property type="method" value="EM"/>
    <property type="resolution" value="3.79 A"/>
    <property type="chains" value="DD=1-312"/>
</dbReference>
<dbReference type="PDB" id="8EUB">
    <property type="method" value="EM"/>
    <property type="resolution" value="2.52 A"/>
    <property type="chains" value="VA=1-312"/>
</dbReference>
<dbReference type="PDB" id="8EVQ">
    <property type="method" value="EM"/>
    <property type="resolution" value="2.72 A"/>
    <property type="chains" value="V=1-312"/>
</dbReference>
<dbReference type="PDB" id="8EVR">
    <property type="method" value="EM"/>
    <property type="resolution" value="2.87 A"/>
    <property type="chains" value="V=1-312"/>
</dbReference>
<dbReference type="PDB" id="8EVS">
    <property type="method" value="EM"/>
    <property type="resolution" value="2.62 A"/>
    <property type="chains" value="V=1-312"/>
</dbReference>
<dbReference type="PDB" id="8EWB">
    <property type="method" value="EM"/>
    <property type="resolution" value="2.87 A"/>
    <property type="chains" value="V=1-312"/>
</dbReference>
<dbReference type="PDB" id="8K2D">
    <property type="method" value="EM"/>
    <property type="resolution" value="3.20 A"/>
    <property type="chains" value="P0=1-312"/>
</dbReference>
<dbReference type="PDB" id="8K82">
    <property type="method" value="EM"/>
    <property type="resolution" value="3.00 A"/>
    <property type="chains" value="P0=1-312"/>
</dbReference>
<dbReference type="PDB" id="8P8M">
    <property type="method" value="EM"/>
    <property type="resolution" value="2.66 A"/>
    <property type="chains" value="RV=1-312"/>
</dbReference>
<dbReference type="PDB" id="8P9A">
    <property type="method" value="X-ray"/>
    <property type="resolution" value="2.90 A"/>
    <property type="chains" value="p0=1-312"/>
</dbReference>
<dbReference type="PDB" id="8Y0U">
    <property type="method" value="EM"/>
    <property type="resolution" value="3.59 A"/>
    <property type="chains" value="P0=1-312"/>
</dbReference>
<dbReference type="PDB" id="9F9S">
    <property type="method" value="EM"/>
    <property type="resolution" value="2.90 A"/>
    <property type="chains" value="MQ=1-312"/>
</dbReference>
<dbReference type="PDBsum" id="3J16"/>
<dbReference type="PDBsum" id="3J77"/>
<dbReference type="PDBsum" id="3J78"/>
<dbReference type="PDBsum" id="4U3M"/>
<dbReference type="PDBsum" id="4U3N"/>
<dbReference type="PDBsum" id="4U3U"/>
<dbReference type="PDBsum" id="4U4N"/>
<dbReference type="PDBsum" id="4U4O"/>
<dbReference type="PDBsum" id="4U4Q"/>
<dbReference type="PDBsum" id="4U4R"/>
<dbReference type="PDBsum" id="4U4U"/>
<dbReference type="PDBsum" id="4U4Y"/>
<dbReference type="PDBsum" id="4U4Z"/>
<dbReference type="PDBsum" id="4U50"/>
<dbReference type="PDBsum" id="4U51"/>
<dbReference type="PDBsum" id="4U52"/>
<dbReference type="PDBsum" id="4U53"/>
<dbReference type="PDBsum" id="4U55"/>
<dbReference type="PDBsum" id="4U56"/>
<dbReference type="PDBsum" id="4U6F"/>
<dbReference type="PDBsum" id="4V5Z"/>
<dbReference type="PDBsum" id="4V6I"/>
<dbReference type="PDBsum" id="4V7R"/>
<dbReference type="PDBsum" id="4V88"/>
<dbReference type="PDBsum" id="4V8T"/>
<dbReference type="PDBsum" id="4V8Y"/>
<dbReference type="PDBsum" id="4V8Z"/>
<dbReference type="PDBsum" id="5APN"/>
<dbReference type="PDBsum" id="5APO"/>
<dbReference type="PDBsum" id="5DAT"/>
<dbReference type="PDBsum" id="5DC3"/>
<dbReference type="PDBsum" id="5DGE"/>
<dbReference type="PDBsum" id="5DGF"/>
<dbReference type="PDBsum" id="5DGV"/>
<dbReference type="PDBsum" id="5FCI"/>
<dbReference type="PDBsum" id="5FCJ"/>
<dbReference type="PDBsum" id="5I4L"/>
<dbReference type="PDBsum" id="5JUO"/>
<dbReference type="PDBsum" id="5JUP"/>
<dbReference type="PDBsum" id="5JUS"/>
<dbReference type="PDBsum" id="5JUT"/>
<dbReference type="PDBsum" id="5JUU"/>
<dbReference type="PDBsum" id="5LYB"/>
<dbReference type="PDBsum" id="5MEI"/>
<dbReference type="PDBsum" id="5NDG"/>
<dbReference type="PDBsum" id="5OBM"/>
<dbReference type="PDBsum" id="5ON6"/>
<dbReference type="PDBsum" id="5TBW"/>
<dbReference type="PDBsum" id="5TGA"/>
<dbReference type="PDBsum" id="5TGM"/>
<dbReference type="PDBsum" id="6GQ1"/>
<dbReference type="PDBsum" id="6GQB"/>
<dbReference type="PDBsum" id="6GQV"/>
<dbReference type="PDBsum" id="6HHQ"/>
<dbReference type="PDBsum" id="6I7O"/>
<dbReference type="PDBsum" id="6OIG"/>
<dbReference type="PDBsum" id="6R84"/>
<dbReference type="PDBsum" id="6R86"/>
<dbReference type="PDBsum" id="6R87"/>
<dbReference type="PDBsum" id="6SV4"/>
<dbReference type="PDBsum" id="6T83"/>
<dbReference type="PDBsum" id="6WOO"/>
<dbReference type="PDBsum" id="7TOO"/>
<dbReference type="PDBsum" id="7TOP"/>
<dbReference type="PDBsum" id="7U6V"/>
<dbReference type="PDBsum" id="8AAF"/>
<dbReference type="PDBsum" id="8AGT"/>
<dbReference type="PDBsum" id="8AGU"/>
<dbReference type="PDBsum" id="8AGV"/>
<dbReference type="PDBsum" id="8AGW"/>
<dbReference type="PDBsum" id="8AGX"/>
<dbReference type="PDBsum" id="8AGZ"/>
<dbReference type="PDBsum" id="8CCS"/>
<dbReference type="PDBsum" id="8CDL"/>
<dbReference type="PDBsum" id="8CDR"/>
<dbReference type="PDBsum" id="8CEH"/>
<dbReference type="PDBsum" id="8CF5"/>
<dbReference type="PDBsum" id="8CG8"/>
<dbReference type="PDBsum" id="8CGN"/>
<dbReference type="PDBsum" id="8CIV"/>
<dbReference type="PDBsum" id="8CKU"/>
<dbReference type="PDBsum" id="8CMJ"/>
<dbReference type="PDBsum" id="8EUB"/>
<dbReference type="PDBsum" id="8EVQ"/>
<dbReference type="PDBsum" id="8EVR"/>
<dbReference type="PDBsum" id="8EVS"/>
<dbReference type="PDBsum" id="8EWB"/>
<dbReference type="PDBsum" id="8K2D"/>
<dbReference type="PDBsum" id="8K82"/>
<dbReference type="PDBsum" id="8P8M"/>
<dbReference type="PDBsum" id="8P9A"/>
<dbReference type="PDBsum" id="8Y0U"/>
<dbReference type="PDBsum" id="9F9S"/>
<dbReference type="EMDB" id="EMD-0047"/>
<dbReference type="EMDB" id="EMD-0048"/>
<dbReference type="EMDB" id="EMD-0049"/>
<dbReference type="EMDB" id="EMD-10315"/>
<dbReference type="EMDB" id="EMD-10398"/>
<dbReference type="EMDB" id="EMD-15296"/>
<dbReference type="EMDB" id="EMD-15423"/>
<dbReference type="EMDB" id="EMD-15424"/>
<dbReference type="EMDB" id="EMD-15425"/>
<dbReference type="EMDB" id="EMD-15426"/>
<dbReference type="EMDB" id="EMD-15427"/>
<dbReference type="EMDB" id="EMD-15428"/>
<dbReference type="EMDB" id="EMD-16563"/>
<dbReference type="EMDB" id="EMD-16591"/>
<dbReference type="EMDB" id="EMD-16594"/>
<dbReference type="EMDB" id="EMD-16609"/>
<dbReference type="EMDB" id="EMD-16616"/>
<dbReference type="EMDB" id="EMD-16634"/>
<dbReference type="EMDB" id="EMD-16648"/>
<dbReference type="EMDB" id="EMD-16684"/>
<dbReference type="EMDB" id="EMD-16702"/>
<dbReference type="EMDB" id="EMD-16729"/>
<dbReference type="EMDB" id="EMD-17549"/>
<dbReference type="EMDB" id="EMD-20077"/>
<dbReference type="EMDB" id="EMD-21859"/>
<dbReference type="EMDB" id="EMD-26033"/>
<dbReference type="EMDB" id="EMD-26034"/>
<dbReference type="EMDB" id="EMD-28610"/>
<dbReference type="EMDB" id="EMD-28633"/>
<dbReference type="EMDB" id="EMD-28634"/>
<dbReference type="EMDB" id="EMD-28635"/>
<dbReference type="EMDB" id="EMD-28642"/>
<dbReference type="EMDB" id="EMD-36839"/>
<dbReference type="EMDB" id="EMD-36945"/>
<dbReference type="EMDB" id="EMD-4427"/>
<dbReference type="EMDB" id="EMD-4751"/>
<dbReference type="EMDB" id="EMD-4752"/>
<dbReference type="EMDB" id="EMD-4753"/>
<dbReference type="EMDB" id="EMD-50259"/>
<dbReference type="SMR" id="P05317"/>
<dbReference type="BioGRID" id="31602">
    <property type="interactions" value="475"/>
</dbReference>
<dbReference type="ComplexPortal" id="CPX-1601">
    <property type="entry name" value="60S cytosolic large ribosomal subunit"/>
</dbReference>
<dbReference type="DIP" id="DIP-1582N"/>
<dbReference type="FunCoup" id="P05317">
    <property type="interactions" value="1876"/>
</dbReference>
<dbReference type="IntAct" id="P05317">
    <property type="interactions" value="371"/>
</dbReference>
<dbReference type="MINT" id="P05317"/>
<dbReference type="STRING" id="4932.YLR340W"/>
<dbReference type="iPTMnet" id="P05317"/>
<dbReference type="PaxDb" id="4932-YLR340W"/>
<dbReference type="PeptideAtlas" id="P05317"/>
<dbReference type="TopDownProteomics" id="P05317"/>
<dbReference type="EnsemblFungi" id="YLR340W_mRNA">
    <property type="protein sequence ID" value="YLR340W"/>
    <property type="gene ID" value="YLR340W"/>
</dbReference>
<dbReference type="GeneID" id="851052"/>
<dbReference type="KEGG" id="sce:YLR340W"/>
<dbReference type="AGR" id="SGD:S000004332"/>
<dbReference type="SGD" id="S000004332">
    <property type="gene designation" value="RPP0"/>
</dbReference>
<dbReference type="VEuPathDB" id="FungiDB:YLR340W"/>
<dbReference type="eggNOG" id="KOG0815">
    <property type="taxonomic scope" value="Eukaryota"/>
</dbReference>
<dbReference type="GeneTree" id="ENSGT00390000017839"/>
<dbReference type="HOGENOM" id="CLU_053173_1_1_1"/>
<dbReference type="InParanoid" id="P05317"/>
<dbReference type="OMA" id="DMNPFKL"/>
<dbReference type="OrthoDB" id="10259902at2759"/>
<dbReference type="BioCyc" id="YEAST:G3O-32417-MONOMER"/>
<dbReference type="Reactome" id="R-SCE-156827">
    <property type="pathway name" value="L13a-mediated translational silencing of Ceruloplasmin expression"/>
</dbReference>
<dbReference type="Reactome" id="R-SCE-1799339">
    <property type="pathway name" value="SRP-dependent cotranslational protein targeting to membrane"/>
</dbReference>
<dbReference type="Reactome" id="R-SCE-72689">
    <property type="pathway name" value="Formation of a pool of free 40S subunits"/>
</dbReference>
<dbReference type="Reactome" id="R-SCE-72706">
    <property type="pathway name" value="GTP hydrolysis and joining of the 60S ribosomal subunit"/>
</dbReference>
<dbReference type="Reactome" id="R-SCE-975956">
    <property type="pathway name" value="Nonsense Mediated Decay (NMD) independent of the Exon Junction Complex (EJC)"/>
</dbReference>
<dbReference type="Reactome" id="R-SCE-975957">
    <property type="pathway name" value="Nonsense Mediated Decay (NMD) enhanced by the Exon Junction Complex (EJC)"/>
</dbReference>
<dbReference type="BioGRID-ORCS" id="851052">
    <property type="hits" value="6 hits in 10 CRISPR screens"/>
</dbReference>
<dbReference type="EvolutionaryTrace" id="P05317"/>
<dbReference type="PRO" id="PR:P05317"/>
<dbReference type="Proteomes" id="UP000002311">
    <property type="component" value="Chromosome XII"/>
</dbReference>
<dbReference type="RNAct" id="P05317">
    <property type="molecule type" value="protein"/>
</dbReference>
<dbReference type="GO" id="GO:0030686">
    <property type="term" value="C:90S preribosome"/>
    <property type="evidence" value="ECO:0007005"/>
    <property type="project" value="SGD"/>
</dbReference>
<dbReference type="GO" id="GO:0005737">
    <property type="term" value="C:cytoplasm"/>
    <property type="evidence" value="ECO:0000314"/>
    <property type="project" value="SGD"/>
</dbReference>
<dbReference type="GO" id="GO:0022625">
    <property type="term" value="C:cytosolic large ribosomal subunit"/>
    <property type="evidence" value="ECO:0000314"/>
    <property type="project" value="SGD"/>
</dbReference>
<dbReference type="GO" id="GO:0070180">
    <property type="term" value="F:large ribosomal subunit rRNA binding"/>
    <property type="evidence" value="ECO:0000314"/>
    <property type="project" value="SGD"/>
</dbReference>
<dbReference type="GO" id="GO:0003735">
    <property type="term" value="F:structural constituent of ribosome"/>
    <property type="evidence" value="ECO:0000314"/>
    <property type="project" value="SGD"/>
</dbReference>
<dbReference type="GO" id="GO:0002181">
    <property type="term" value="P:cytoplasmic translation"/>
    <property type="evidence" value="ECO:0000315"/>
    <property type="project" value="SGD"/>
</dbReference>
<dbReference type="GO" id="GO:0000027">
    <property type="term" value="P:ribosomal large subunit assembly"/>
    <property type="evidence" value="ECO:0000315"/>
    <property type="project" value="SGD"/>
</dbReference>
<dbReference type="CDD" id="cd05795">
    <property type="entry name" value="Ribosomal_P0_L10e"/>
    <property type="match status" value="1"/>
</dbReference>
<dbReference type="FunFam" id="3.30.70.1730:FF:000002">
    <property type="entry name" value="60S acidic ribosomal protein P0"/>
    <property type="match status" value="1"/>
</dbReference>
<dbReference type="FunFam" id="3.90.105.20:FF:000001">
    <property type="entry name" value="60S acidic ribosomal protein P0"/>
    <property type="match status" value="1"/>
</dbReference>
<dbReference type="Gene3D" id="3.30.70.1730">
    <property type="match status" value="1"/>
</dbReference>
<dbReference type="Gene3D" id="3.90.105.20">
    <property type="match status" value="1"/>
</dbReference>
<dbReference type="InterPro" id="IPR050323">
    <property type="entry name" value="Ribosomal_protein_uL10"/>
</dbReference>
<dbReference type="InterPro" id="IPR001790">
    <property type="entry name" value="Ribosomal_uL10"/>
</dbReference>
<dbReference type="InterPro" id="IPR040637">
    <property type="entry name" value="Ribosomal_uL10-like_insert"/>
</dbReference>
<dbReference type="InterPro" id="IPR043164">
    <property type="entry name" value="Ribosomal_uL10-like_insert_sf"/>
</dbReference>
<dbReference type="InterPro" id="IPR043141">
    <property type="entry name" value="Ribosomal_uL10-like_sf"/>
</dbReference>
<dbReference type="InterPro" id="IPR030670">
    <property type="entry name" value="uL10_eukaryotes"/>
</dbReference>
<dbReference type="PANTHER" id="PTHR45699">
    <property type="entry name" value="60S ACIDIC RIBOSOMAL PROTEIN P0"/>
    <property type="match status" value="1"/>
</dbReference>
<dbReference type="PANTHER" id="PTHR45699:SF3">
    <property type="entry name" value="LARGE RIBOSOMAL SUBUNIT PROTEIN UL10"/>
    <property type="match status" value="1"/>
</dbReference>
<dbReference type="Pfam" id="PF00428">
    <property type="entry name" value="Ribosomal_60s"/>
    <property type="match status" value="1"/>
</dbReference>
<dbReference type="Pfam" id="PF00466">
    <property type="entry name" value="Ribosomal_L10"/>
    <property type="match status" value="1"/>
</dbReference>
<dbReference type="Pfam" id="PF17777">
    <property type="entry name" value="RL10P_insert"/>
    <property type="match status" value="1"/>
</dbReference>
<dbReference type="PIRSF" id="PIRSF039087">
    <property type="entry name" value="L10E"/>
    <property type="match status" value="1"/>
</dbReference>
<dbReference type="SUPFAM" id="SSF160369">
    <property type="entry name" value="Ribosomal protein L10-like"/>
    <property type="match status" value="1"/>
</dbReference>
<comment type="function">
    <text evidence="9">Component of the ribosome, a large ribonucleoprotein complex responsible for the synthesis of proteins in the cell. The small ribosomal subunit (SSU) binds messenger RNAs (mRNAs) and translates the encoded message by selecting cognate aminoacyl-transfer RNA (tRNA) molecules. The large subunit (LSU) contains the ribosomal catalytic site termed the peptidyl transferase center (PTC), which catalyzes the formation of peptide bonds, thereby polymerizing the amino acids delivered by tRNAs into a polypeptide chain. The nascent polypeptides leave the ribosome through a tunnel in the LSU and interact with protein factors that function in enzymatic processing, targeting, and the membrane insertion of nascent chains at the exit of the ribosomal tunnel. uL10 forms part of the P stalk that participates in recruiting G proteins to the ribosome.</text>
</comment>
<comment type="subunit">
    <text evidence="2 3 4 10">Component of the large ribosomal subunit (LSU). Mature yeast ribosomes consist of a small (40S) and a large (60S) subunit. The 40S small subunit contains 1 molecule of ribosomal RNA (18S rRNA) and 33 different proteins (encoded by 57 genes). The large 60S subunit contains 3 rRNA molecules (25S, 5.8S and 5S rRNA) and 46 different proteins (encoded by 81 genes) (PubMed:22096102, PubMed:9559554). The 5 acidic ribosomal P-proteins form the stalk structure of the 60S subunit. They are organized as a pentameric complex in which uL10/P0 interacts with 2 heterodimers, P1A-P2B and P1B-P2A. uL10 directly interacts with 28S rRNA (PubMed:16573688). uL10 interacts with YFL034W (PubMed:15286401).</text>
</comment>
<comment type="interaction">
    <interactant intactId="EBI-15447">
        <id>P05317</id>
    </interactant>
    <interactant intactId="EBI-6333">
        <id>P32324</id>
        <label>EFT2</label>
    </interactant>
    <organismsDiffer>false</organismsDiffer>
    <experiments>3</experiments>
</comment>
<comment type="interaction">
    <interactant intactId="EBI-15447">
        <id>P05317</id>
    </interactant>
    <interactant intactId="EBI-3999">
        <id>P13711</id>
        <label>POX1</label>
    </interactant>
    <organismsDiffer>false</organismsDiffer>
    <experiments>2</experiments>
</comment>
<comment type="interaction">
    <interactant intactId="EBI-15447">
        <id>P05317</id>
    </interactant>
    <interactant intactId="EBI-15452">
        <id>P05318</id>
        <label>RPP1A</label>
    </interactant>
    <organismsDiffer>false</organismsDiffer>
    <experiments>4</experiments>
</comment>
<comment type="interaction">
    <interactant intactId="EBI-15447">
        <id>P05317</id>
    </interactant>
    <interactant intactId="EBI-15460">
        <id>P10622</id>
        <label>RPP1B</label>
    </interactant>
    <organismsDiffer>false</organismsDiffer>
    <experiments>3</experiments>
</comment>
<comment type="interaction">
    <interactant intactId="EBI-15447">
        <id>P05317</id>
    </interactant>
    <interactant intactId="EBI-15456">
        <id>P05319</id>
        <label>RPP2A</label>
    </interactant>
    <organismsDiffer>false</organismsDiffer>
    <experiments>3</experiments>
</comment>
<comment type="interaction">
    <interactant intactId="EBI-15447">
        <id>P05317</id>
    </interactant>
    <interactant intactId="EBI-15464">
        <id>P02400</id>
        <label>RPP2B</label>
    </interactant>
    <organismsDiffer>false</organismsDiffer>
    <experiments>2</experiments>
</comment>
<comment type="subcellular location">
    <subcellularLocation>
        <location evidence="4">Cytoplasm</location>
    </subcellularLocation>
</comment>
<comment type="similarity">
    <text evidence="8">Belongs to the universal ribosomal protein uL10 family.</text>
</comment>
<reference key="1">
    <citation type="journal article" date="1988" name="Nucleic Acids Res.">
        <title>cDNA and deduced amino acid sequence of 38 kDa-type acidic ribosomal protein A0 from Saccharomyces cerevisiae.</title>
        <authorList>
            <person name="Mitsui K."/>
            <person name="Tsurugi K."/>
        </authorList>
    </citation>
    <scope>NUCLEOTIDE SEQUENCE [MRNA]</scope>
    <source>
        <strain>IFO 40028</strain>
    </source>
</reference>
<reference key="2">
    <citation type="journal article" date="1989" name="J. Biochem.">
        <title>The gene and the primary structure of acidic ribosomal protein A0 from yeast Saccharomyces cerevisiae which shows partial homology to bacterial ribosomal protein L10.</title>
        <authorList>
            <person name="Mitsui K."/>
            <person name="Nakagawa T."/>
            <person name="Tsurugi K."/>
        </authorList>
    </citation>
    <scope>NUCLEOTIDE SEQUENCE [GENOMIC DNA]</scope>
</reference>
<reference key="3">
    <citation type="journal article" date="1990" name="J. Bacteriol.">
        <title>A family of genes encode the multiple forms of the Saccharomyces cerevisiae ribosomal proteins equivalent to the Escherichia coli L12 protein and a single form of the L10-equivalent ribosomal protein.</title>
        <authorList>
            <person name="Newton C.H."/>
            <person name="Shimmin L.C."/>
            <person name="Yee J."/>
            <person name="Dennis P.P."/>
        </authorList>
    </citation>
    <scope>NUCLEOTIDE SEQUENCE [GENOMIC DNA]</scope>
    <source>
        <strain>SR26-12C</strain>
    </source>
</reference>
<reference key="4">
    <citation type="journal article" date="1990" name="J. Bacteriol.">
        <authorList>
            <person name="Newton C.H."/>
            <person name="Shimmin L.C."/>
            <person name="Yee J."/>
            <person name="Dennis P.P."/>
        </authorList>
    </citation>
    <scope>ERRATUM OF PUBMED:2404943</scope>
</reference>
<reference key="5">
    <citation type="journal article" date="1997" name="Nature">
        <title>The nucleotide sequence of Saccharomyces cerevisiae chromosome XII.</title>
        <authorList>
            <person name="Johnston M."/>
            <person name="Hillier L.W."/>
            <person name="Riles L."/>
            <person name="Albermann K."/>
            <person name="Andre B."/>
            <person name="Ansorge W."/>
            <person name="Benes V."/>
            <person name="Brueckner M."/>
            <person name="Delius H."/>
            <person name="Dubois E."/>
            <person name="Duesterhoeft A."/>
            <person name="Entian K.-D."/>
            <person name="Floeth M."/>
            <person name="Goffeau A."/>
            <person name="Hebling U."/>
            <person name="Heumann K."/>
            <person name="Heuss-Neitzel D."/>
            <person name="Hilbert H."/>
            <person name="Hilger F."/>
            <person name="Kleine K."/>
            <person name="Koetter P."/>
            <person name="Louis E.J."/>
            <person name="Messenguy F."/>
            <person name="Mewes H.-W."/>
            <person name="Miosga T."/>
            <person name="Moestl D."/>
            <person name="Mueller-Auer S."/>
            <person name="Nentwich U."/>
            <person name="Obermaier B."/>
            <person name="Piravandi E."/>
            <person name="Pohl T.M."/>
            <person name="Portetelle D."/>
            <person name="Purnelle B."/>
            <person name="Rechmann S."/>
            <person name="Rieger M."/>
            <person name="Rinke M."/>
            <person name="Rose M."/>
            <person name="Scharfe M."/>
            <person name="Scherens B."/>
            <person name="Scholler P."/>
            <person name="Schwager C."/>
            <person name="Schwarz S."/>
            <person name="Underwood A.P."/>
            <person name="Urrestarazu L.A."/>
            <person name="Vandenbol M."/>
            <person name="Verhasselt P."/>
            <person name="Vierendeels F."/>
            <person name="Voet M."/>
            <person name="Volckaert G."/>
            <person name="Voss H."/>
            <person name="Wambutt R."/>
            <person name="Wedler E."/>
            <person name="Wedler H."/>
            <person name="Zimmermann F.K."/>
            <person name="Zollner A."/>
            <person name="Hani J."/>
            <person name="Hoheisel J.D."/>
        </authorList>
    </citation>
    <scope>NUCLEOTIDE SEQUENCE [LARGE SCALE GENOMIC DNA]</scope>
    <source>
        <strain>ATCC 204508 / S288c</strain>
    </source>
</reference>
<reference key="6">
    <citation type="journal article" date="2014" name="G3 (Bethesda)">
        <title>The reference genome sequence of Saccharomyces cerevisiae: Then and now.</title>
        <authorList>
            <person name="Engel S.R."/>
            <person name="Dietrich F.S."/>
            <person name="Fisk D.G."/>
            <person name="Binkley G."/>
            <person name="Balakrishnan R."/>
            <person name="Costanzo M.C."/>
            <person name="Dwight S.S."/>
            <person name="Hitz B.C."/>
            <person name="Karra K."/>
            <person name="Nash R.S."/>
            <person name="Weng S."/>
            <person name="Wong E.D."/>
            <person name="Lloyd P."/>
            <person name="Skrzypek M.S."/>
            <person name="Miyasato S.R."/>
            <person name="Simison M."/>
            <person name="Cherry J.M."/>
        </authorList>
    </citation>
    <scope>GENOME REANNOTATION</scope>
    <source>
        <strain>ATCC 204508 / S288c</strain>
    </source>
</reference>
<reference key="7">
    <citation type="journal article" date="1998" name="Yeast">
        <title>The list of cytoplasmic ribosomal proteins of Saccharomyces cerevisiae.</title>
        <authorList>
            <person name="Planta R.J."/>
            <person name="Mager W.H."/>
        </authorList>
    </citation>
    <scope>NOMENCLATURE</scope>
    <scope>SUBUNIT</scope>
</reference>
<reference key="8">
    <citation type="journal article" date="1998" name="Biochemistry">
        <title>Phosphorylation of ribosomal protein P0 is not essential for ribosome function but can affect translation.</title>
        <authorList>
            <person name="Rodriguez-Gabriel M.A."/>
            <person name="Remacha M."/>
            <person name="Ballesta J.P.G."/>
        </authorList>
    </citation>
    <scope>PHOSPHORYLATION AT SER-302</scope>
</reference>
<reference key="9">
    <citation type="journal article" date="2004" name="J. Biosci.">
        <title>Identification of a hypothetical membrane protein interactor of ribosomal phosphoprotein P0.</title>
        <authorList>
            <person name="Aruna K."/>
            <person name="Chakraborty T."/>
            <person name="Nambeesan S."/>
            <person name="Mannan A.B."/>
            <person name="Sehgal A."/>
            <person name="Balachandara S.R."/>
            <person name="Sharma S."/>
        </authorList>
    </citation>
    <scope>INTERACTION WITH YFL034W</scope>
</reference>
<reference key="10">
    <citation type="journal article" date="2006" name="Mol. Microbiol.">
        <title>Yeast ribosomal P0 protein has two separate binding sites for P1/P2 proteins.</title>
        <authorList>
            <person name="Krokowski D."/>
            <person name="Boguszewska A."/>
            <person name="Abramczyk D."/>
            <person name="Liljas A."/>
            <person name="Tchorzewski M."/>
            <person name="Grankowski N."/>
        </authorList>
    </citation>
    <scope>INTERACTION WITH RPP1A; RPP1B; RPP2A AND RPP2B</scope>
</reference>
<reference key="11">
    <citation type="journal article" date="2007" name="J. Proteome Res.">
        <title>Large-scale phosphorylation analysis of alpha-factor-arrested Saccharomyces cerevisiae.</title>
        <authorList>
            <person name="Li X."/>
            <person name="Gerber S.A."/>
            <person name="Rudner A.D."/>
            <person name="Beausoleil S.A."/>
            <person name="Haas W."/>
            <person name="Villen J."/>
            <person name="Elias J.E."/>
            <person name="Gygi S.P."/>
        </authorList>
    </citation>
    <scope>PHOSPHORYLATION [LARGE SCALE ANALYSIS] AT SER-302</scope>
    <scope>IDENTIFICATION BY MASS SPECTROMETRY [LARGE SCALE ANALYSIS]</scope>
    <source>
        <strain>ADR376</strain>
    </source>
</reference>
<reference key="12">
    <citation type="journal article" date="2008" name="Mol. Cell. Proteomics">
        <title>A multidimensional chromatography technology for in-depth phosphoproteome analysis.</title>
        <authorList>
            <person name="Albuquerque C.P."/>
            <person name="Smolka M.B."/>
            <person name="Payne S.H."/>
            <person name="Bafna V."/>
            <person name="Eng J."/>
            <person name="Zhou H."/>
        </authorList>
    </citation>
    <scope>PHOSPHORYLATION [LARGE SCALE ANALYSIS] AT SER-302</scope>
    <scope>IDENTIFICATION BY MASS SPECTROMETRY [LARGE SCALE ANALYSIS]</scope>
</reference>
<reference key="13">
    <citation type="journal article" date="2009" name="Science">
        <title>Global analysis of Cdk1 substrate phosphorylation sites provides insights into evolution.</title>
        <authorList>
            <person name="Holt L.J."/>
            <person name="Tuch B.B."/>
            <person name="Villen J."/>
            <person name="Johnson A.D."/>
            <person name="Gygi S.P."/>
            <person name="Morgan D.O."/>
        </authorList>
    </citation>
    <scope>PHOSPHORYLATION [LARGE SCALE ANALYSIS] AT SER-68 AND SER-302</scope>
    <scope>IDENTIFICATION BY MASS SPECTROMETRY [LARGE SCALE ANALYSIS]</scope>
</reference>
<reference key="14">
    <citation type="journal article" date="2012" name="Proteomics">
        <title>Sites of ubiquitin attachment in Saccharomyces cerevisiae.</title>
        <authorList>
            <person name="Starita L.M."/>
            <person name="Lo R.S."/>
            <person name="Eng J.K."/>
            <person name="von Haller P.D."/>
            <person name="Fields S."/>
        </authorList>
    </citation>
    <scope>UBIQUITINATION [LARGE SCALE ANALYSIS] AT LYS-14; LYS-97 AND LYS-144</scope>
    <scope>IDENTIFICATION BY MASS SPECTROMETRY [LARGE SCALE ANALYSIS]</scope>
</reference>
<reference key="15">
    <citation type="journal article" date="2014" name="Curr. Opin. Struct. Biol.">
        <title>A new system for naming ribosomal proteins.</title>
        <authorList>
            <person name="Ban N."/>
            <person name="Beckmann R."/>
            <person name="Cate J.H.D."/>
            <person name="Dinman J.D."/>
            <person name="Dragon F."/>
            <person name="Ellis S.R."/>
            <person name="Lafontaine D.L.J."/>
            <person name="Lindahl L."/>
            <person name="Liljas A."/>
            <person name="Lipton J.M."/>
            <person name="McAlear M.A."/>
            <person name="Moore P.B."/>
            <person name="Noller H.F."/>
            <person name="Ortega J."/>
            <person name="Panse V.G."/>
            <person name="Ramakrishnan V."/>
            <person name="Spahn C.M.T."/>
            <person name="Steitz T.A."/>
            <person name="Tchorzewski M."/>
            <person name="Tollervey D."/>
            <person name="Warren A.J."/>
            <person name="Williamson J.R."/>
            <person name="Wilson D."/>
            <person name="Yonath A."/>
            <person name="Yusupov M."/>
        </authorList>
    </citation>
    <scope>NOMENCLATURE</scope>
</reference>
<reference key="16">
    <citation type="journal article" date="2010" name="Science">
        <title>Crystal structure of the eukaryotic ribosome.</title>
        <authorList>
            <person name="Ben-Shem A."/>
            <person name="Jenner L."/>
            <person name="Yusupova G."/>
            <person name="Yusupov M."/>
        </authorList>
    </citation>
    <scope>X-RAY CRYSTALLOGRAPHY (4.00 ANGSTROMS)</scope>
</reference>
<reference key="17">
    <citation type="journal article" date="2011" name="Science">
        <title>The structure of the eukaryotic ribosome at 3.0 A resolution.</title>
        <authorList>
            <person name="Ben-Shem A."/>
            <person name="Garreau de Loubresse N."/>
            <person name="Melnikov S."/>
            <person name="Jenner L."/>
            <person name="Yusupova G."/>
            <person name="Yusupov M."/>
        </authorList>
    </citation>
    <scope>X-RAY CRYSTALLOGRAPHY (3.00 ANGSTROMS)</scope>
    <scope>SUBUNIT</scope>
    <scope>SUBCELLULAR LOCATION</scope>
</reference>
<evidence type="ECO:0000256" key="1">
    <source>
        <dbReference type="SAM" id="MobiDB-lite"/>
    </source>
</evidence>
<evidence type="ECO:0000269" key="2">
    <source>
    </source>
</evidence>
<evidence type="ECO:0000269" key="3">
    <source>
    </source>
</evidence>
<evidence type="ECO:0000269" key="4">
    <source>
    </source>
</evidence>
<evidence type="ECO:0000269" key="5">
    <source>
    </source>
</evidence>
<evidence type="ECO:0000303" key="6">
    <source>
    </source>
</evidence>
<evidence type="ECO:0000303" key="7">
    <source>
    </source>
</evidence>
<evidence type="ECO:0000305" key="8"/>
<evidence type="ECO:0000305" key="9">
    <source>
    </source>
</evidence>
<evidence type="ECO:0000305" key="10">
    <source>
    </source>
</evidence>
<evidence type="ECO:0007744" key="11">
    <source>
    </source>
</evidence>
<evidence type="ECO:0007744" key="12">
    <source>
    </source>
</evidence>
<evidence type="ECO:0007744" key="13">
    <source>
    </source>
</evidence>
<evidence type="ECO:0007744" key="14">
    <source>
    </source>
</evidence>
<evidence type="ECO:0007829" key="15">
    <source>
        <dbReference type="PDB" id="4U3M"/>
    </source>
</evidence>
<evidence type="ECO:0007829" key="16">
    <source>
        <dbReference type="PDB" id="4U3U"/>
    </source>
</evidence>
<evidence type="ECO:0007829" key="17">
    <source>
        <dbReference type="PDB" id="4U4R"/>
    </source>
</evidence>
<organism>
    <name type="scientific">Saccharomyces cerevisiae (strain ATCC 204508 / S288c)</name>
    <name type="common">Baker's yeast</name>
    <dbReference type="NCBI Taxonomy" id="559292"/>
    <lineage>
        <taxon>Eukaryota</taxon>
        <taxon>Fungi</taxon>
        <taxon>Dikarya</taxon>
        <taxon>Ascomycota</taxon>
        <taxon>Saccharomycotina</taxon>
        <taxon>Saccharomycetes</taxon>
        <taxon>Saccharomycetales</taxon>
        <taxon>Saccharomycetaceae</taxon>
        <taxon>Saccharomyces</taxon>
    </lineage>
</organism>
<proteinExistence type="evidence at protein level"/>
<name>RLA0_YEAST</name>
<gene>
    <name evidence="7" type="primary">RPP0</name>
    <name type="synonym">L10E</name>
    <name type="synonym">RPA0</name>
    <name type="synonym">RPL10E</name>
    <name type="synonym">RPLA0</name>
    <name type="ordered locus">YLR340W</name>
    <name type="ORF">L8300.8</name>
</gene>
<keyword id="KW-0002">3D-structure</keyword>
<keyword id="KW-0963">Cytoplasm</keyword>
<keyword id="KW-1017">Isopeptide bond</keyword>
<keyword id="KW-0597">Phosphoprotein</keyword>
<keyword id="KW-1185">Reference proteome</keyword>
<keyword id="KW-0687">Ribonucleoprotein</keyword>
<keyword id="KW-0689">Ribosomal protein</keyword>
<keyword id="KW-0832">Ubl conjugation</keyword>
<sequence length="312" mass="33717">MGGIREKKAEYFAKLREYLEEYKSLFVVGVDNVSSQQMHEVRKELRGRAVVLMGKNTMVRRAIRGFLSDLPDFEKLLPFVKGNVGFVFTNEPLTEIKNVIVSNRVAAPARAGAVAPEDIWVRAVNTGMEPGKTSFFQALGVPTKIARGTIEIVSDVKVVDAGNKVGQSEASLLNLLNISPFTFGLTVVQVYDNGQVFPSSILDITDEELVSHFVSAVSTIASISLAIGYPTLPSVGHTLINNYKDLLAVAIAASYHYPEIEDLVDRIENPEKYAAAAPAATSAASGDAAPAEEAAAEEEEESDDDMGFGLFD</sequence>
<protein>
    <recommendedName>
        <fullName evidence="6">Large ribosomal subunit protein uL10</fullName>
    </recommendedName>
    <alternativeName>
        <fullName evidence="7">60S acidic ribosomal protein P0</fullName>
        <shortName>A0</shortName>
    </alternativeName>
    <alternativeName>
        <fullName>L10e</fullName>
    </alternativeName>
</protein>